<proteinExistence type="inferred from homology"/>
<organism>
    <name type="scientific">Carboxydothermus hydrogenoformans (strain ATCC BAA-161 / DSM 6008 / Z-2901)</name>
    <dbReference type="NCBI Taxonomy" id="246194"/>
    <lineage>
        <taxon>Bacteria</taxon>
        <taxon>Bacillati</taxon>
        <taxon>Bacillota</taxon>
        <taxon>Clostridia</taxon>
        <taxon>Thermoanaerobacterales</taxon>
        <taxon>Thermoanaerobacteraceae</taxon>
        <taxon>Carboxydothermus</taxon>
    </lineage>
</organism>
<evidence type="ECO:0000255" key="1">
    <source>
        <dbReference type="HAMAP-Rule" id="MF_00367"/>
    </source>
</evidence>
<evidence type="ECO:0000255" key="2">
    <source>
        <dbReference type="PROSITE-ProRule" id="PRU01050"/>
    </source>
</evidence>
<keyword id="KW-1003">Cell membrane</keyword>
<keyword id="KW-0963">Cytoplasm</keyword>
<keyword id="KW-0342">GTP-binding</keyword>
<keyword id="KW-0472">Membrane</keyword>
<keyword id="KW-0547">Nucleotide-binding</keyword>
<keyword id="KW-1185">Reference proteome</keyword>
<keyword id="KW-0690">Ribosome biogenesis</keyword>
<keyword id="KW-0694">RNA-binding</keyword>
<keyword id="KW-0699">rRNA-binding</keyword>
<gene>
    <name evidence="1" type="primary">era</name>
    <name type="ordered locus">CHY_0430</name>
</gene>
<accession>Q3AEZ3</accession>
<comment type="function">
    <text evidence="1">An essential GTPase that binds both GDP and GTP, with rapid nucleotide exchange. Plays a role in 16S rRNA processing and 30S ribosomal subunit biogenesis and possibly also in cell cycle regulation and energy metabolism.</text>
</comment>
<comment type="subunit">
    <text evidence="1">Monomer.</text>
</comment>
<comment type="subcellular location">
    <subcellularLocation>
        <location>Cytoplasm</location>
    </subcellularLocation>
    <subcellularLocation>
        <location evidence="1">Cell membrane</location>
        <topology evidence="1">Peripheral membrane protein</topology>
    </subcellularLocation>
</comment>
<comment type="similarity">
    <text evidence="1 2">Belongs to the TRAFAC class TrmE-Era-EngA-EngB-Septin-like GTPase superfamily. Era GTPase family.</text>
</comment>
<dbReference type="EMBL" id="CP000141">
    <property type="protein sequence ID" value="ABB16149.1"/>
    <property type="molecule type" value="Genomic_DNA"/>
</dbReference>
<dbReference type="RefSeq" id="WP_011343367.1">
    <property type="nucleotide sequence ID" value="NC_007503.1"/>
</dbReference>
<dbReference type="SMR" id="Q3AEZ3"/>
<dbReference type="FunCoup" id="Q3AEZ3">
    <property type="interactions" value="420"/>
</dbReference>
<dbReference type="STRING" id="246194.CHY_0430"/>
<dbReference type="KEGG" id="chy:CHY_0430"/>
<dbReference type="eggNOG" id="COG1159">
    <property type="taxonomic scope" value="Bacteria"/>
</dbReference>
<dbReference type="HOGENOM" id="CLU_038009_1_0_9"/>
<dbReference type="InParanoid" id="Q3AEZ3"/>
<dbReference type="OrthoDB" id="9805918at2"/>
<dbReference type="Proteomes" id="UP000002706">
    <property type="component" value="Chromosome"/>
</dbReference>
<dbReference type="GO" id="GO:0005829">
    <property type="term" value="C:cytosol"/>
    <property type="evidence" value="ECO:0007669"/>
    <property type="project" value="TreeGrafter"/>
</dbReference>
<dbReference type="GO" id="GO:0005886">
    <property type="term" value="C:plasma membrane"/>
    <property type="evidence" value="ECO:0007669"/>
    <property type="project" value="UniProtKB-SubCell"/>
</dbReference>
<dbReference type="GO" id="GO:0005525">
    <property type="term" value="F:GTP binding"/>
    <property type="evidence" value="ECO:0007669"/>
    <property type="project" value="UniProtKB-UniRule"/>
</dbReference>
<dbReference type="GO" id="GO:0003924">
    <property type="term" value="F:GTPase activity"/>
    <property type="evidence" value="ECO:0007669"/>
    <property type="project" value="UniProtKB-UniRule"/>
</dbReference>
<dbReference type="GO" id="GO:0043024">
    <property type="term" value="F:ribosomal small subunit binding"/>
    <property type="evidence" value="ECO:0007669"/>
    <property type="project" value="TreeGrafter"/>
</dbReference>
<dbReference type="GO" id="GO:0070181">
    <property type="term" value="F:small ribosomal subunit rRNA binding"/>
    <property type="evidence" value="ECO:0007669"/>
    <property type="project" value="UniProtKB-UniRule"/>
</dbReference>
<dbReference type="GO" id="GO:0000028">
    <property type="term" value="P:ribosomal small subunit assembly"/>
    <property type="evidence" value="ECO:0007669"/>
    <property type="project" value="TreeGrafter"/>
</dbReference>
<dbReference type="CDD" id="cd04163">
    <property type="entry name" value="Era"/>
    <property type="match status" value="1"/>
</dbReference>
<dbReference type="CDD" id="cd22534">
    <property type="entry name" value="KH-II_Era"/>
    <property type="match status" value="1"/>
</dbReference>
<dbReference type="FunFam" id="3.30.300.20:FF:000003">
    <property type="entry name" value="GTPase Era"/>
    <property type="match status" value="1"/>
</dbReference>
<dbReference type="FunFam" id="3.40.50.300:FF:000094">
    <property type="entry name" value="GTPase Era"/>
    <property type="match status" value="1"/>
</dbReference>
<dbReference type="Gene3D" id="3.30.300.20">
    <property type="match status" value="1"/>
</dbReference>
<dbReference type="Gene3D" id="3.40.50.300">
    <property type="entry name" value="P-loop containing nucleotide triphosphate hydrolases"/>
    <property type="match status" value="1"/>
</dbReference>
<dbReference type="HAMAP" id="MF_00367">
    <property type="entry name" value="GTPase_Era"/>
    <property type="match status" value="1"/>
</dbReference>
<dbReference type="InterPro" id="IPR030388">
    <property type="entry name" value="G_ERA_dom"/>
</dbReference>
<dbReference type="InterPro" id="IPR006073">
    <property type="entry name" value="GTP-bd"/>
</dbReference>
<dbReference type="InterPro" id="IPR005662">
    <property type="entry name" value="GTPase_Era-like"/>
</dbReference>
<dbReference type="InterPro" id="IPR015946">
    <property type="entry name" value="KH_dom-like_a/b"/>
</dbReference>
<dbReference type="InterPro" id="IPR004044">
    <property type="entry name" value="KH_dom_type_2"/>
</dbReference>
<dbReference type="InterPro" id="IPR009019">
    <property type="entry name" value="KH_sf_prok-type"/>
</dbReference>
<dbReference type="InterPro" id="IPR027417">
    <property type="entry name" value="P-loop_NTPase"/>
</dbReference>
<dbReference type="InterPro" id="IPR005225">
    <property type="entry name" value="Small_GTP-bd"/>
</dbReference>
<dbReference type="NCBIfam" id="TIGR00436">
    <property type="entry name" value="era"/>
    <property type="match status" value="1"/>
</dbReference>
<dbReference type="NCBIfam" id="NF000908">
    <property type="entry name" value="PRK00089.1"/>
    <property type="match status" value="1"/>
</dbReference>
<dbReference type="NCBIfam" id="TIGR00231">
    <property type="entry name" value="small_GTP"/>
    <property type="match status" value="1"/>
</dbReference>
<dbReference type="PANTHER" id="PTHR42698">
    <property type="entry name" value="GTPASE ERA"/>
    <property type="match status" value="1"/>
</dbReference>
<dbReference type="PANTHER" id="PTHR42698:SF1">
    <property type="entry name" value="GTPASE ERA, MITOCHONDRIAL"/>
    <property type="match status" value="1"/>
</dbReference>
<dbReference type="Pfam" id="PF07650">
    <property type="entry name" value="KH_2"/>
    <property type="match status" value="1"/>
</dbReference>
<dbReference type="Pfam" id="PF01926">
    <property type="entry name" value="MMR_HSR1"/>
    <property type="match status" value="1"/>
</dbReference>
<dbReference type="PRINTS" id="PR00326">
    <property type="entry name" value="GTP1OBG"/>
</dbReference>
<dbReference type="SUPFAM" id="SSF52540">
    <property type="entry name" value="P-loop containing nucleoside triphosphate hydrolases"/>
    <property type="match status" value="1"/>
</dbReference>
<dbReference type="SUPFAM" id="SSF54814">
    <property type="entry name" value="Prokaryotic type KH domain (KH-domain type II)"/>
    <property type="match status" value="1"/>
</dbReference>
<dbReference type="PROSITE" id="PS51713">
    <property type="entry name" value="G_ERA"/>
    <property type="match status" value="1"/>
</dbReference>
<dbReference type="PROSITE" id="PS50823">
    <property type="entry name" value="KH_TYPE_2"/>
    <property type="match status" value="1"/>
</dbReference>
<name>ERA_CARHZ</name>
<sequence length="298" mass="33793">MSYKSGFVSIVGRPNVGKSTLLNQVVGTKIAIMSDKPQTTRNKIRAVLTSEKGQIIFIDTPGVQKPRNKLGEFMLKQALTSLDEVDVLLYVVEANSPIGPQENYLLKTLAEVKTPIILVVNKIDVVKMIEAQTLARQIESRLKVAKTYYISALNGTGVSELVEGIFELLPEGPPYYPEGQVTDYPERFIIAEYIREQILHLTREEIPHSVAVVVEEIKPRENSNTVYVSAVIYVERESQKGIIIGKNGQMLKEIGQRARLEIERLLGSNIYLDLWVKVKEDWRNKDVWIRNFGFTEFE</sequence>
<feature type="chain" id="PRO_1000079670" description="GTPase Era">
    <location>
        <begin position="1"/>
        <end position="298"/>
    </location>
</feature>
<feature type="domain" description="Era-type G" evidence="2">
    <location>
        <begin position="4"/>
        <end position="171"/>
    </location>
</feature>
<feature type="domain" description="KH type-2" evidence="1">
    <location>
        <begin position="202"/>
        <end position="280"/>
    </location>
</feature>
<feature type="region of interest" description="G1" evidence="2">
    <location>
        <begin position="12"/>
        <end position="19"/>
    </location>
</feature>
<feature type="region of interest" description="G2" evidence="2">
    <location>
        <begin position="38"/>
        <end position="42"/>
    </location>
</feature>
<feature type="region of interest" description="G3" evidence="2">
    <location>
        <begin position="59"/>
        <end position="62"/>
    </location>
</feature>
<feature type="region of interest" description="G4" evidence="2">
    <location>
        <begin position="121"/>
        <end position="124"/>
    </location>
</feature>
<feature type="region of interest" description="G5" evidence="2">
    <location>
        <begin position="150"/>
        <end position="152"/>
    </location>
</feature>
<feature type="binding site" evidence="1">
    <location>
        <begin position="12"/>
        <end position="19"/>
    </location>
    <ligand>
        <name>GTP</name>
        <dbReference type="ChEBI" id="CHEBI:37565"/>
    </ligand>
</feature>
<feature type="binding site" evidence="1">
    <location>
        <begin position="59"/>
        <end position="63"/>
    </location>
    <ligand>
        <name>GTP</name>
        <dbReference type="ChEBI" id="CHEBI:37565"/>
    </ligand>
</feature>
<feature type="binding site" evidence="1">
    <location>
        <begin position="121"/>
        <end position="124"/>
    </location>
    <ligand>
        <name>GTP</name>
        <dbReference type="ChEBI" id="CHEBI:37565"/>
    </ligand>
</feature>
<protein>
    <recommendedName>
        <fullName evidence="1">GTPase Era</fullName>
    </recommendedName>
</protein>
<reference key="1">
    <citation type="journal article" date="2005" name="PLoS Genet.">
        <title>Life in hot carbon monoxide: the complete genome sequence of Carboxydothermus hydrogenoformans Z-2901.</title>
        <authorList>
            <person name="Wu M."/>
            <person name="Ren Q."/>
            <person name="Durkin A.S."/>
            <person name="Daugherty S.C."/>
            <person name="Brinkac L.M."/>
            <person name="Dodson R.J."/>
            <person name="Madupu R."/>
            <person name="Sullivan S.A."/>
            <person name="Kolonay J.F."/>
            <person name="Nelson W.C."/>
            <person name="Tallon L.J."/>
            <person name="Jones K.M."/>
            <person name="Ulrich L.E."/>
            <person name="Gonzalez J.M."/>
            <person name="Zhulin I.B."/>
            <person name="Robb F.T."/>
            <person name="Eisen J.A."/>
        </authorList>
    </citation>
    <scope>NUCLEOTIDE SEQUENCE [LARGE SCALE GENOMIC DNA]</scope>
    <source>
        <strain>ATCC BAA-161 / DSM 6008 / Z-2901</strain>
    </source>
</reference>